<dbReference type="EMBL" id="AE000516">
    <property type="protein sequence ID" value="AAK46586.1"/>
    <property type="molecule type" value="Genomic_DNA"/>
</dbReference>
<dbReference type="PIR" id="F70778">
    <property type="entry name" value="F70778"/>
</dbReference>
<dbReference type="RefSeq" id="WP_003411543.1">
    <property type="nucleotide sequence ID" value="NZ_KK341227.1"/>
</dbReference>
<dbReference type="SMR" id="P9WPH4"/>
<dbReference type="KEGG" id="mtc:MT2302"/>
<dbReference type="PATRIC" id="fig|83331.31.peg.2479"/>
<dbReference type="HOGENOM" id="CLU_037725_0_0_11"/>
<dbReference type="Proteomes" id="UP000001020">
    <property type="component" value="Chromosome"/>
</dbReference>
<dbReference type="Gene3D" id="1.10.10.2840">
    <property type="entry name" value="PucR C-terminal helix-turn-helix domain"/>
    <property type="match status" value="1"/>
</dbReference>
<dbReference type="InterPro" id="IPR051448">
    <property type="entry name" value="CdaR-like_regulators"/>
</dbReference>
<dbReference type="InterPro" id="IPR041522">
    <property type="entry name" value="CdaR_GGDEF"/>
</dbReference>
<dbReference type="InterPro" id="IPR025736">
    <property type="entry name" value="PucR_C-HTH_dom"/>
</dbReference>
<dbReference type="InterPro" id="IPR042070">
    <property type="entry name" value="PucR_C-HTH_sf"/>
</dbReference>
<dbReference type="PANTHER" id="PTHR33744">
    <property type="entry name" value="CARBOHYDRATE DIACID REGULATOR"/>
    <property type="match status" value="1"/>
</dbReference>
<dbReference type="PANTHER" id="PTHR33744:SF7">
    <property type="entry name" value="PUCR FAMILY TRANSCRIPTIONAL REGULATOR"/>
    <property type="match status" value="1"/>
</dbReference>
<dbReference type="Pfam" id="PF17853">
    <property type="entry name" value="GGDEF_2"/>
    <property type="match status" value="1"/>
</dbReference>
<dbReference type="Pfam" id="PF13556">
    <property type="entry name" value="HTH_30"/>
    <property type="match status" value="1"/>
</dbReference>
<proteinExistence type="inferred from homology"/>
<organism>
    <name type="scientific">Mycobacterium tuberculosis (strain CDC 1551 / Oshkosh)</name>
    <dbReference type="NCBI Taxonomy" id="83331"/>
    <lineage>
        <taxon>Bacteria</taxon>
        <taxon>Bacillati</taxon>
        <taxon>Actinomycetota</taxon>
        <taxon>Actinomycetes</taxon>
        <taxon>Mycobacteriales</taxon>
        <taxon>Mycobacteriaceae</taxon>
        <taxon>Mycobacterium</taxon>
        <taxon>Mycobacterium tuberculosis complex</taxon>
    </lineage>
</organism>
<evidence type="ECO:0000256" key="1">
    <source>
        <dbReference type="SAM" id="MobiDB-lite"/>
    </source>
</evidence>
<evidence type="ECO:0000305" key="2"/>
<accession>P9WPH4</accession>
<accession>L0TBQ0</accession>
<accession>P63749</accession>
<accession>Q10523</accession>
<keyword id="KW-1185">Reference proteome</keyword>
<comment type="similarity">
    <text evidence="2">Belongs to the CdaR family.</text>
</comment>
<gene>
    <name type="ordered locus">MT2302</name>
</gene>
<protein>
    <recommendedName>
        <fullName>Uncharacterized protein MT2302</fullName>
    </recommendedName>
</protein>
<name>Y2242_MYCTO</name>
<feature type="chain" id="PRO_0000426951" description="Uncharacterized protein MT2302">
    <location>
        <begin position="1"/>
        <end position="414"/>
    </location>
</feature>
<feature type="region of interest" description="Disordered" evidence="1">
    <location>
        <begin position="204"/>
        <end position="230"/>
    </location>
</feature>
<feature type="compositionally biased region" description="Basic and acidic residues" evidence="1">
    <location>
        <begin position="220"/>
        <end position="230"/>
    </location>
</feature>
<sequence>MNDNQLAPVARPRSPLELLDTVPDSLLRRLKQYSGRLATEAVSAMQERLPFFADLEASQRASVALVVQTAVVNFVEWMHDPHSDVGYTAQAFELVPQDLTRRIALRQTVDMVRVTMEFFEEVVPLLARSEEQLTALTVGILKYSRDLAFTAATAYADAAEARGTWDSRMEASVVDAVVRGDTGPELLSRAAALNWDTTAPATVLVGTPAPGPNGSNSDGDSERASQDVRDTAARHGRAALTDVHGTWLVAIVSGQLSPTEKFLKDLLAAFADAPVVIGPTAPMLTAAHRSASEAISGMNAVAGWRGAPRPVLARELLPERALMGDASAIVALHTDVMRPLADAGPTLIETLDAYLDCGGAIEACARKLFVHPNTVRYRLKRITDFTGRDPTQPRDAYVLRVAATVGQLNYPTPH</sequence>
<reference key="1">
    <citation type="journal article" date="2002" name="J. Bacteriol.">
        <title>Whole-genome comparison of Mycobacterium tuberculosis clinical and laboratory strains.</title>
        <authorList>
            <person name="Fleischmann R.D."/>
            <person name="Alland D."/>
            <person name="Eisen J.A."/>
            <person name="Carpenter L."/>
            <person name="White O."/>
            <person name="Peterson J.D."/>
            <person name="DeBoy R.T."/>
            <person name="Dodson R.J."/>
            <person name="Gwinn M.L."/>
            <person name="Haft D.H."/>
            <person name="Hickey E.K."/>
            <person name="Kolonay J.F."/>
            <person name="Nelson W.C."/>
            <person name="Umayam L.A."/>
            <person name="Ermolaeva M.D."/>
            <person name="Salzberg S.L."/>
            <person name="Delcher A."/>
            <person name="Utterback T.R."/>
            <person name="Weidman J.F."/>
            <person name="Khouri H.M."/>
            <person name="Gill J."/>
            <person name="Mikula A."/>
            <person name="Bishai W."/>
            <person name="Jacobs W.R. Jr."/>
            <person name="Venter J.C."/>
            <person name="Fraser C.M."/>
        </authorList>
    </citation>
    <scope>NUCLEOTIDE SEQUENCE [LARGE SCALE GENOMIC DNA]</scope>
    <source>
        <strain>CDC 1551 / Oshkosh</strain>
    </source>
</reference>